<name>EXTN2_ARATH</name>
<sequence length="743" mass="83015">MGPSAHLISALGVIIMATMVAAYEPETYASPPPLYSSPLPEVEYKTPPLPYVDSSPPPTYTPAPEVEYKSPPPPYVYSSPPPPTYSPSPKVDYKSPPPPYVYSSPPPPYYSPSPKVDYKSPPPPYVYNSPPPPYYSPSPKVDYKSPPPPYVYSSPPPPYYSPSPKVEYKSPPPPYVYSSPPPPYYSPSPKVDYKSPPPPYVYSSPPPPYYSPSPKVEYKSPPPPYVYSSPPPPYYSPSPKVDYKSPPPPYVYSSPPPPYYSPSPKVDYKSPPPPYVYSSPPPPYYSPSPKVDYKSPPPPYVYSSPPPPYYSPSPKVDYKSPPPPYVYSSPPPPYYSPSPKVDYKSPPPPYVYSSPPPPTYSPSPKVDYKSPPPPYVYSSPPPPYYSPSPKVEYKSPPPPYVYSSPPPPTYSPSPKVYYKSPPPPYVYSSPPPPYYSPSPKVYYKSPPPPYVYSSPPPPYYSPSPKVYYKSPPPPYVYSSPPPPYYSPSPKVYYKSPPPPYVYSSPPPPYYSPSPKVYYKSPPPPYVYSSPPPPYYSPSPKVHYKSPPPPYVYSSPPPPYYSPSPKVHYKSPPPPYVYNSPPPPYYSPSPKVYYKSPPPPYVYSSPPPPYYSPSPKVYYKSPPPPYVYSSPPPPYYSPSPKVYYKSPPPPYYSPSPKVYYKSPPHPHVCVCPPPPPCYSPSPKVVYKSPPPPYVYNSPPPPYYSPSPKVYYKSPPPPSYYSPSPKVEYKSPPPPSYSPSPKTEY</sequence>
<reference key="1">
    <citation type="journal article" date="2001" name="DNA Res.">
        <title>Characterization of four extensin genes in Arabidopsis thaliana by differential gene expression under stress and non-stress conditions.</title>
        <authorList>
            <person name="Yoshiba Y."/>
            <person name="Aoki C."/>
            <person name="Iuchi S."/>
            <person name="Nanjo T."/>
            <person name="Seki M."/>
            <person name="Sekiguchi F."/>
            <person name="Yamaguchi-Shinozaki K."/>
            <person name="Shinozaki K."/>
        </authorList>
    </citation>
    <scope>NUCLEOTIDE SEQUENCE [MRNA]</scope>
    <source>
        <strain>cv. Columbia</strain>
    </source>
</reference>
<reference key="2">
    <citation type="journal article" date="2000" name="Nature">
        <title>Sequence and analysis of chromosome 3 of the plant Arabidopsis thaliana.</title>
        <authorList>
            <person name="Salanoubat M."/>
            <person name="Lemcke K."/>
            <person name="Rieger M."/>
            <person name="Ansorge W."/>
            <person name="Unseld M."/>
            <person name="Fartmann B."/>
            <person name="Valle G."/>
            <person name="Bloecker H."/>
            <person name="Perez-Alonso M."/>
            <person name="Obermaier B."/>
            <person name="Delseny M."/>
            <person name="Boutry M."/>
            <person name="Grivell L.A."/>
            <person name="Mache R."/>
            <person name="Puigdomenech P."/>
            <person name="De Simone V."/>
            <person name="Choisne N."/>
            <person name="Artiguenave F."/>
            <person name="Robert C."/>
            <person name="Brottier P."/>
            <person name="Wincker P."/>
            <person name="Cattolico L."/>
            <person name="Weissenbach J."/>
            <person name="Saurin W."/>
            <person name="Quetier F."/>
            <person name="Schaefer M."/>
            <person name="Mueller-Auer S."/>
            <person name="Gabel C."/>
            <person name="Fuchs M."/>
            <person name="Benes V."/>
            <person name="Wurmbach E."/>
            <person name="Drzonek H."/>
            <person name="Erfle H."/>
            <person name="Jordan N."/>
            <person name="Bangert S."/>
            <person name="Wiedelmann R."/>
            <person name="Kranz H."/>
            <person name="Voss H."/>
            <person name="Holland R."/>
            <person name="Brandt P."/>
            <person name="Nyakatura G."/>
            <person name="Vezzi A."/>
            <person name="D'Angelo M."/>
            <person name="Pallavicini A."/>
            <person name="Toppo S."/>
            <person name="Simionati B."/>
            <person name="Conrad A."/>
            <person name="Hornischer K."/>
            <person name="Kauer G."/>
            <person name="Loehnert T.-H."/>
            <person name="Nordsiek G."/>
            <person name="Reichelt J."/>
            <person name="Scharfe M."/>
            <person name="Schoen O."/>
            <person name="Bargues M."/>
            <person name="Terol J."/>
            <person name="Climent J."/>
            <person name="Navarro P."/>
            <person name="Collado C."/>
            <person name="Perez-Perez A."/>
            <person name="Ottenwaelder B."/>
            <person name="Duchemin D."/>
            <person name="Cooke R."/>
            <person name="Laudie M."/>
            <person name="Berger-Llauro C."/>
            <person name="Purnelle B."/>
            <person name="Masuy D."/>
            <person name="de Haan M."/>
            <person name="Maarse A.C."/>
            <person name="Alcaraz J.-P."/>
            <person name="Cottet A."/>
            <person name="Casacuberta E."/>
            <person name="Monfort A."/>
            <person name="Argiriou A."/>
            <person name="Flores M."/>
            <person name="Liguori R."/>
            <person name="Vitale D."/>
            <person name="Mannhaupt G."/>
            <person name="Haase D."/>
            <person name="Schoof H."/>
            <person name="Rudd S."/>
            <person name="Zaccaria P."/>
            <person name="Mewes H.-W."/>
            <person name="Mayer K.F.X."/>
            <person name="Kaul S."/>
            <person name="Town C.D."/>
            <person name="Koo H.L."/>
            <person name="Tallon L.J."/>
            <person name="Jenkins J."/>
            <person name="Rooney T."/>
            <person name="Rizzo M."/>
            <person name="Walts A."/>
            <person name="Utterback T."/>
            <person name="Fujii C.Y."/>
            <person name="Shea T.P."/>
            <person name="Creasy T.H."/>
            <person name="Haas B."/>
            <person name="Maiti R."/>
            <person name="Wu D."/>
            <person name="Peterson J."/>
            <person name="Van Aken S."/>
            <person name="Pai G."/>
            <person name="Militscher J."/>
            <person name="Sellers P."/>
            <person name="Gill J.E."/>
            <person name="Feldblyum T.V."/>
            <person name="Preuss D."/>
            <person name="Lin X."/>
            <person name="Nierman W.C."/>
            <person name="Salzberg S.L."/>
            <person name="White O."/>
            <person name="Venter J.C."/>
            <person name="Fraser C.M."/>
            <person name="Kaneko T."/>
            <person name="Nakamura Y."/>
            <person name="Sato S."/>
            <person name="Kato T."/>
            <person name="Asamizu E."/>
            <person name="Sasamoto S."/>
            <person name="Kimura T."/>
            <person name="Idesawa K."/>
            <person name="Kawashima K."/>
            <person name="Kishida Y."/>
            <person name="Kiyokawa C."/>
            <person name="Kohara M."/>
            <person name="Matsumoto M."/>
            <person name="Matsuno A."/>
            <person name="Muraki A."/>
            <person name="Nakayama S."/>
            <person name="Nakazaki N."/>
            <person name="Shinpo S."/>
            <person name="Takeuchi C."/>
            <person name="Wada T."/>
            <person name="Watanabe A."/>
            <person name="Yamada M."/>
            <person name="Yasuda M."/>
            <person name="Tabata S."/>
        </authorList>
    </citation>
    <scope>NUCLEOTIDE SEQUENCE [LARGE SCALE GENOMIC DNA]</scope>
    <source>
        <strain>cv. Columbia</strain>
    </source>
</reference>
<reference key="3">
    <citation type="journal article" date="2017" name="Plant J.">
        <title>Araport11: a complete reannotation of the Arabidopsis thaliana reference genome.</title>
        <authorList>
            <person name="Cheng C.Y."/>
            <person name="Krishnakumar V."/>
            <person name="Chan A.P."/>
            <person name="Thibaud-Nissen F."/>
            <person name="Schobel S."/>
            <person name="Town C.D."/>
        </authorList>
    </citation>
    <scope>GENOME REANNOTATION</scope>
    <source>
        <strain>cv. Columbia</strain>
    </source>
</reference>
<reference key="4">
    <citation type="journal article" date="2010" name="Plant Physiol.">
        <title>A bioinformatics approach to the identification, classification, and analysis of hydroxyproline-rich glycoproteins.</title>
        <authorList>
            <person name="Showalter A.M."/>
            <person name="Keppler B."/>
            <person name="Lichtenberg J."/>
            <person name="Gu D."/>
            <person name="Welch L.R."/>
        </authorList>
    </citation>
    <scope>GENE FAMILY</scope>
    <scope>NOMENCLATURE</scope>
</reference>
<proteinExistence type="evidence at transcript level"/>
<comment type="function">
    <text>Structural component which strengthens the primary cell wall.</text>
</comment>
<comment type="subcellular location">
    <subcellularLocation>
        <location>Secreted</location>
        <location>Primary cell wall</location>
    </subcellularLocation>
</comment>
<comment type="tissue specificity">
    <text>Predominantly expressed in the roots.</text>
</comment>
<comment type="developmental stage">
    <text>Early expressed in the whole plant, but was restricted to lower stems, flower buds and roots in the mature plant (6 weeks old).</text>
</comment>
<comment type="induction">
    <text>By wounding and water stress; in response to plant hormones 2,4-D, BAP treatment; in response to L-Pro treatment. Repressed by salt stress.</text>
</comment>
<comment type="PTM">
    <text>Extensins contain a characteristic repeat of the pentapeptide Ser-Pro(4). The proline residues are hydroxylated and then O-glycosylated (arabinosylation).</text>
</comment>
<comment type="PTM">
    <text>Synthetised as soluble proteins which become insolubilised in the cell wall through the intermolecular cross-linking of Tyr on adjacent monomers. Isodityrosine (IDT) stabilizes and makes rigid the part of the polypeptide where IDT functional sites are present.</text>
</comment>
<comment type="similarity">
    <text evidence="5">Belongs to the extensin family.</text>
</comment>
<comment type="sequence caution" evidence="5">
    <conflict type="erroneous gene model prediction">
        <sequence resource="EMBL-CDS" id="AEE79253"/>
    </conflict>
</comment>
<comment type="sequence caution" evidence="5">
    <conflict type="frameshift">
        <sequence resource="EMBL-CDS" id="BAB21544"/>
    </conflict>
</comment>
<comment type="sequence caution" evidence="5">
    <conflict type="miscellaneous discrepancy">
        <sequence resource="EMBL-CDS" id="BAB21544"/>
    </conflict>
    <text>Incomplete cDNA clone.</text>
</comment>
<protein>
    <recommendedName>
        <fullName evidence="3 4">Extensin-2</fullName>
        <shortName evidence="3 4">AtExt2</shortName>
    </recommendedName>
    <alternativeName>
        <fullName>Cell wall hydroxyproline-rich glycoprotein 1</fullName>
        <shortName>HRGP1</shortName>
    </alternativeName>
</protein>
<dbReference type="EMBL" id="AB022782">
    <property type="protein sequence ID" value="BAB21544.1"/>
    <property type="status" value="ALT_SEQ"/>
    <property type="molecule type" value="mRNA"/>
</dbReference>
<dbReference type="EMBL" id="AL138656">
    <property type="protein sequence ID" value="CAB77579.2"/>
    <property type="molecule type" value="Genomic_DNA"/>
</dbReference>
<dbReference type="EMBL" id="CP002686">
    <property type="protein sequence ID" value="AEE79253.1"/>
    <property type="status" value="ALT_SEQ"/>
    <property type="molecule type" value="Genomic_DNA"/>
</dbReference>
<dbReference type="EMBL" id="CP002686">
    <property type="protein sequence ID" value="ANM63926.1"/>
    <property type="molecule type" value="Genomic_DNA"/>
</dbReference>
<dbReference type="PIR" id="T47618">
    <property type="entry name" value="T47618"/>
</dbReference>
<dbReference type="RefSeq" id="NP_001325986.1">
    <property type="nucleotide sequence ID" value="NM_001339685.1"/>
</dbReference>
<dbReference type="RefSeq" id="NP_191022.2">
    <property type="nucleotide sequence ID" value="NM_115316.3"/>
</dbReference>
<dbReference type="BioGRID" id="9940">
    <property type="interactions" value="1"/>
</dbReference>
<dbReference type="STRING" id="3702.Q9M1G9"/>
<dbReference type="PaxDb" id="3702-AT3G54590.1"/>
<dbReference type="EnsemblPlants" id="AT3G54590.3">
    <property type="protein sequence ID" value="AT3G54590.3"/>
    <property type="gene ID" value="AT3G54590"/>
</dbReference>
<dbReference type="GeneID" id="824624"/>
<dbReference type="Gramene" id="AT3G54590.3">
    <property type="protein sequence ID" value="AT3G54590.3"/>
    <property type="gene ID" value="AT3G54590"/>
</dbReference>
<dbReference type="KEGG" id="ath:AT3G54590"/>
<dbReference type="Araport" id="AT3G54590"/>
<dbReference type="TAIR" id="AT3G54590">
    <property type="gene designation" value="HRGP1"/>
</dbReference>
<dbReference type="eggNOG" id="ENOG502RHFU">
    <property type="taxonomic scope" value="Eukaryota"/>
</dbReference>
<dbReference type="HOGENOM" id="CLU_439011_0_0_1"/>
<dbReference type="InParanoid" id="Q9M1G9"/>
<dbReference type="OMA" id="MTQPRTQ"/>
<dbReference type="PRO" id="PR:Q9M1G9"/>
<dbReference type="Proteomes" id="UP000006548">
    <property type="component" value="Chromosome 3"/>
</dbReference>
<dbReference type="ExpressionAtlas" id="Q9M1G9">
    <property type="expression patterns" value="baseline and differential"/>
</dbReference>
<dbReference type="GO" id="GO:0005576">
    <property type="term" value="C:extracellular region"/>
    <property type="evidence" value="ECO:0007669"/>
    <property type="project" value="UniProtKB-KW"/>
</dbReference>
<dbReference type="GO" id="GO:0009530">
    <property type="term" value="C:primary cell wall"/>
    <property type="evidence" value="ECO:0007669"/>
    <property type="project" value="UniProtKB-SubCell"/>
</dbReference>
<dbReference type="GO" id="GO:0005199">
    <property type="term" value="F:structural constituent of cell wall"/>
    <property type="evidence" value="ECO:0007669"/>
    <property type="project" value="InterPro"/>
</dbReference>
<dbReference type="GO" id="GO:0009664">
    <property type="term" value="P:plant-type cell wall organization"/>
    <property type="evidence" value="ECO:0007669"/>
    <property type="project" value="InterPro"/>
</dbReference>
<dbReference type="InterPro" id="IPR006706">
    <property type="entry name" value="Extensin_dom"/>
</dbReference>
<dbReference type="PANTHER" id="PTHR36586:SF47">
    <property type="entry name" value="EXTENSIN DOMAIN-CONTAINING PROTEIN"/>
    <property type="match status" value="1"/>
</dbReference>
<dbReference type="PANTHER" id="PTHR36586">
    <property type="entry name" value="PROLINE-RICH EXTENSIN-LIKE"/>
    <property type="match status" value="1"/>
</dbReference>
<dbReference type="Pfam" id="PF04554">
    <property type="entry name" value="Extensin_2"/>
    <property type="match status" value="24"/>
</dbReference>
<dbReference type="PRINTS" id="PR01217">
    <property type="entry name" value="PRICHEXTENSN"/>
</dbReference>
<evidence type="ECO:0000255" key="1"/>
<evidence type="ECO:0000256" key="2">
    <source>
        <dbReference type="SAM" id="MobiDB-lite"/>
    </source>
</evidence>
<evidence type="ECO:0000303" key="3">
    <source>
    </source>
</evidence>
<evidence type="ECO:0000303" key="4">
    <source>
    </source>
</evidence>
<evidence type="ECO:0000305" key="5"/>
<evidence type="ECO:0000312" key="6">
    <source>
        <dbReference type="Araport" id="AT3G54590"/>
    </source>
</evidence>
<evidence type="ECO:0000312" key="7">
    <source>
        <dbReference type="EMBL" id="CAB77579.2"/>
    </source>
</evidence>
<gene>
    <name evidence="3 4" type="primary">EXT2</name>
    <name type="synonym">HRGP1</name>
    <name evidence="6" type="ordered locus">At3g54590</name>
    <name evidence="7" type="ORF">T14E10.160</name>
</gene>
<organism>
    <name type="scientific">Arabidopsis thaliana</name>
    <name type="common">Mouse-ear cress</name>
    <dbReference type="NCBI Taxonomy" id="3702"/>
    <lineage>
        <taxon>Eukaryota</taxon>
        <taxon>Viridiplantae</taxon>
        <taxon>Streptophyta</taxon>
        <taxon>Embryophyta</taxon>
        <taxon>Tracheophyta</taxon>
        <taxon>Spermatophyta</taxon>
        <taxon>Magnoliopsida</taxon>
        <taxon>eudicotyledons</taxon>
        <taxon>Gunneridae</taxon>
        <taxon>Pentapetalae</taxon>
        <taxon>rosids</taxon>
        <taxon>malvids</taxon>
        <taxon>Brassicales</taxon>
        <taxon>Brassicaceae</taxon>
        <taxon>Camelineae</taxon>
        <taxon>Arabidopsis</taxon>
    </lineage>
</organism>
<feature type="signal peptide" evidence="1">
    <location>
        <begin position="1"/>
        <end position="22"/>
    </location>
</feature>
<feature type="chain" id="PRO_0000008726" description="Extensin-2">
    <location>
        <begin position="23"/>
        <end position="743"/>
    </location>
</feature>
<feature type="repeat" description="1-1">
    <location>
        <begin position="70"/>
        <end position="78"/>
    </location>
</feature>
<feature type="repeat" description="2-1">
    <location>
        <begin position="79"/>
        <end position="94"/>
    </location>
</feature>
<feature type="repeat" description="1-2">
    <location>
        <begin position="95"/>
        <end position="103"/>
    </location>
</feature>
<feature type="repeat" description="2-2">
    <location>
        <begin position="104"/>
        <end position="119"/>
    </location>
</feature>
<feature type="repeat" description="1-3">
    <location>
        <begin position="120"/>
        <end position="128"/>
    </location>
</feature>
<feature type="repeat" description="2-3">
    <location>
        <begin position="129"/>
        <end position="144"/>
    </location>
</feature>
<feature type="repeat" description="1-4">
    <location>
        <begin position="145"/>
        <end position="153"/>
    </location>
</feature>
<feature type="repeat" description="2-4">
    <location>
        <begin position="154"/>
        <end position="169"/>
    </location>
</feature>
<feature type="repeat" description="1-5">
    <location>
        <begin position="170"/>
        <end position="178"/>
    </location>
</feature>
<feature type="repeat" description="2-5">
    <location>
        <begin position="179"/>
        <end position="194"/>
    </location>
</feature>
<feature type="repeat" description="1-6">
    <location>
        <begin position="195"/>
        <end position="203"/>
    </location>
</feature>
<feature type="repeat" description="2-6">
    <location>
        <begin position="204"/>
        <end position="219"/>
    </location>
</feature>
<feature type="repeat" description="1-7">
    <location>
        <begin position="220"/>
        <end position="228"/>
    </location>
</feature>
<feature type="repeat" description="2-7">
    <location>
        <begin position="229"/>
        <end position="244"/>
    </location>
</feature>
<feature type="repeat" description="1-8">
    <location>
        <begin position="245"/>
        <end position="253"/>
    </location>
</feature>
<feature type="repeat" description="2-8">
    <location>
        <begin position="254"/>
        <end position="269"/>
    </location>
</feature>
<feature type="repeat" description="1-9">
    <location>
        <begin position="270"/>
        <end position="278"/>
    </location>
</feature>
<feature type="repeat" description="2-9">
    <location>
        <begin position="279"/>
        <end position="294"/>
    </location>
</feature>
<feature type="repeat" description="1-10">
    <location>
        <begin position="295"/>
        <end position="303"/>
    </location>
</feature>
<feature type="repeat" description="2-10">
    <location>
        <begin position="304"/>
        <end position="319"/>
    </location>
</feature>
<feature type="repeat" description="1-11">
    <location>
        <begin position="320"/>
        <end position="328"/>
    </location>
</feature>
<feature type="repeat" description="2-11">
    <location>
        <begin position="329"/>
        <end position="344"/>
    </location>
</feature>
<feature type="repeat" description="1-12">
    <location>
        <begin position="345"/>
        <end position="353"/>
    </location>
</feature>
<feature type="repeat" description="2-12">
    <location>
        <begin position="354"/>
        <end position="369"/>
    </location>
</feature>
<feature type="repeat" description="1-13">
    <location>
        <begin position="370"/>
        <end position="378"/>
    </location>
</feature>
<feature type="repeat" description="2-13">
    <location>
        <begin position="379"/>
        <end position="394"/>
    </location>
</feature>
<feature type="repeat" description="1-14">
    <location>
        <begin position="395"/>
        <end position="403"/>
    </location>
</feature>
<feature type="repeat" description="2-14">
    <location>
        <begin position="404"/>
        <end position="419"/>
    </location>
</feature>
<feature type="repeat" description="1-15">
    <location>
        <begin position="420"/>
        <end position="428"/>
    </location>
</feature>
<feature type="repeat" description="2-15">
    <location>
        <begin position="429"/>
        <end position="444"/>
    </location>
</feature>
<feature type="repeat" description="1-16">
    <location>
        <begin position="445"/>
        <end position="453"/>
    </location>
</feature>
<feature type="repeat" description="2-16">
    <location>
        <begin position="454"/>
        <end position="469"/>
    </location>
</feature>
<feature type="repeat" description="1-17">
    <location>
        <begin position="470"/>
        <end position="478"/>
    </location>
</feature>
<feature type="repeat" description="2-17">
    <location>
        <begin position="479"/>
        <end position="494"/>
    </location>
</feature>
<feature type="repeat" description="1-18">
    <location>
        <begin position="495"/>
        <end position="503"/>
    </location>
</feature>
<feature type="repeat" description="2-18">
    <location>
        <begin position="504"/>
        <end position="519"/>
    </location>
</feature>
<feature type="repeat" description="1-19">
    <location>
        <begin position="520"/>
        <end position="528"/>
    </location>
</feature>
<feature type="repeat" description="2-19">
    <location>
        <begin position="529"/>
        <end position="544"/>
    </location>
</feature>
<feature type="repeat" description="1-20">
    <location>
        <begin position="545"/>
        <end position="553"/>
    </location>
</feature>
<feature type="repeat" description="2-20">
    <location>
        <begin position="554"/>
        <end position="569"/>
    </location>
</feature>
<feature type="repeat" description="1-21">
    <location>
        <begin position="570"/>
        <end position="578"/>
    </location>
</feature>
<feature type="repeat" description="2-21">
    <location>
        <begin position="579"/>
        <end position="594"/>
    </location>
</feature>
<feature type="repeat" description="1-22">
    <location>
        <begin position="595"/>
        <end position="603"/>
    </location>
</feature>
<feature type="repeat" description="2-22">
    <location>
        <begin position="604"/>
        <end position="619"/>
    </location>
</feature>
<feature type="repeat" description="1-23">
    <location>
        <begin position="620"/>
        <end position="628"/>
    </location>
</feature>
<feature type="repeat" description="2-23">
    <location>
        <begin position="629"/>
        <end position="644"/>
    </location>
</feature>
<feature type="repeat" description="2-24">
    <location>
        <begin position="645"/>
        <end position="660"/>
    </location>
</feature>
<feature type="region of interest" description="Disordered" evidence="2">
    <location>
        <begin position="46"/>
        <end position="93"/>
    </location>
</feature>
<feature type="region of interest" description="23 X 9 AA repeats of S-P-P-P-P-Y-V-Y-[SN]">
    <location>
        <begin position="70"/>
        <end position="628"/>
    </location>
</feature>
<feature type="region of interest" description="24 X 16 AA repeats of S-P-P-P-P-[YT]-Y-S-P-S-P-K-V-[DEYH]-Y-K">
    <location>
        <begin position="79"/>
        <end position="660"/>
    </location>
</feature>
<feature type="region of interest" description="Disordered" evidence="2">
    <location>
        <begin position="715"/>
        <end position="743"/>
    </location>
</feature>
<feature type="compositionally biased region" description="Pro residues" evidence="2">
    <location>
        <begin position="47"/>
        <end position="61"/>
    </location>
</feature>
<feature type="compositionally biased region" description="Pro residues" evidence="2">
    <location>
        <begin position="70"/>
        <end position="86"/>
    </location>
</feature>
<keyword id="KW-0134">Cell wall</keyword>
<keyword id="KW-0961">Cell wall biogenesis/degradation</keyword>
<keyword id="KW-0325">Glycoprotein</keyword>
<keyword id="KW-0379">Hydroxylation</keyword>
<keyword id="KW-1185">Reference proteome</keyword>
<keyword id="KW-0677">Repeat</keyword>
<keyword id="KW-0964">Secreted</keyword>
<keyword id="KW-0732">Signal</keyword>
<accession>Q9M1G9</accession>
<accession>F4JCZ2</accession>
<accession>Q9CAZ9</accession>